<accession>P23793</accession>
<organism>
    <name type="scientific">Mycoplasmopsis arginini</name>
    <name type="common">Mycoplasma arginini</name>
    <dbReference type="NCBI Taxonomy" id="2094"/>
    <lineage>
        <taxon>Bacteria</taxon>
        <taxon>Bacillati</taxon>
        <taxon>Mycoplasmatota</taxon>
        <taxon>Mycoplasmoidales</taxon>
        <taxon>Metamycoplasmataceae</taxon>
        <taxon>Mycoplasmopsis</taxon>
    </lineage>
</organism>
<sequence>MSVFDSKFKGIHVYSEIGELESVLVHEPGREIDYITPARLDELLFSAILESHDARKEHKQFVAELKANDINVVELIDLVAETYDLASQEAKDKLIEEFLEDSEPVLSEEHKVVVRNFLKAKKTSRELVEIMMAGITKYDLGIEADHELIVDPMPNLYFTRDPFASVGNGVTIHYMRYKVRQRETLFSRFVFSNHPKLINTPWYYDPSLKLSIEGGDVFIYNNDTLVVGVSERTDLQTVTLLAKNIVANKECEFKRIVAINVPKWTNLMHLDTWLTMLDKDKFLYSPIANDVFKFWDYDLVNGGAEPQPVENGLPLEGLLQSIINKKPVLIPIAGEGASQMEIERETHFDGTNYLAIRPGVVIGYSRNEKTNAALEAAGIKVLPFHGNQLSLGMGNARCMSMPLSRKDVKW</sequence>
<proteinExistence type="evidence at protein level"/>
<name>ARCA_MYCAR</name>
<gene>
    <name type="primary">arcA</name>
</gene>
<comment type="catalytic activity">
    <reaction>
        <text>L-arginine + H2O = L-citrulline + NH4(+)</text>
        <dbReference type="Rhea" id="RHEA:19597"/>
        <dbReference type="ChEBI" id="CHEBI:15377"/>
        <dbReference type="ChEBI" id="CHEBI:28938"/>
        <dbReference type="ChEBI" id="CHEBI:32682"/>
        <dbReference type="ChEBI" id="CHEBI:57743"/>
        <dbReference type="EC" id="3.5.3.6"/>
    </reaction>
</comment>
<comment type="pathway">
    <text>Amino-acid degradation; L-arginine degradation via ADI pathway; carbamoyl phosphate from L-arginine: step 1/2.</text>
</comment>
<comment type="subunit">
    <text>Homodimer.</text>
</comment>
<comment type="subcellular location">
    <subcellularLocation>
        <location evidence="3">Cytoplasm</location>
    </subcellularLocation>
</comment>
<comment type="similarity">
    <text evidence="3">Belongs to the arginine deiminase family.</text>
</comment>
<feature type="initiator methionine" description="Removed" evidence="2">
    <location>
        <position position="1"/>
    </location>
</feature>
<feature type="chain" id="PRO_0000182219" description="Arginine deiminase">
    <location>
        <begin position="2"/>
        <end position="410"/>
    </location>
</feature>
<feature type="active site" description="Amidino-cysteine intermediate" evidence="1">
    <location>
        <position position="398"/>
    </location>
</feature>
<feature type="sequence conflict" description="In Ref. 3; CAA36693." evidence="3" ref="3">
    <original>I</original>
    <variation>T</variation>
    <location>
        <position position="76"/>
    </location>
</feature>
<feature type="sequence conflict" description="In Ref. 3; CAA36693." evidence="3" ref="3">
    <original>A</original>
    <variation>S</variation>
    <location>
        <position position="120"/>
    </location>
</feature>
<feature type="sequence conflict" description="In Ref. 2; CAA38210." evidence="3" ref="2">
    <original>E</original>
    <variation>K</variation>
    <location>
        <position position="126"/>
    </location>
</feature>
<feature type="sequence conflict" description="In Ref. 3; CAA36693." evidence="3" ref="3">
    <original>EAAGIKVLPFHGNQLSLGMGNARCMSMPLSRKDVKW</original>
    <variation>DKKDYLRPISI</variation>
    <location>
        <begin position="375"/>
        <end position="410"/>
    </location>
</feature>
<feature type="strand" evidence="4">
    <location>
        <begin position="16"/>
        <end position="18"/>
    </location>
</feature>
<feature type="strand" evidence="4">
    <location>
        <begin position="20"/>
        <end position="25"/>
    </location>
</feature>
<feature type="helix" evidence="4">
    <location>
        <begin position="30"/>
        <end position="34"/>
    </location>
</feature>
<feature type="helix" evidence="4">
    <location>
        <begin position="37"/>
        <end position="39"/>
    </location>
</feature>
<feature type="helix" evidence="4">
    <location>
        <begin position="40"/>
        <end position="43"/>
    </location>
</feature>
<feature type="helix" evidence="4">
    <location>
        <begin position="51"/>
        <end position="66"/>
    </location>
</feature>
<feature type="turn" evidence="4">
    <location>
        <begin position="67"/>
        <end position="69"/>
    </location>
</feature>
<feature type="strand" evidence="4">
    <location>
        <begin position="71"/>
        <end position="74"/>
    </location>
</feature>
<feature type="helix" evidence="4">
    <location>
        <begin position="75"/>
        <end position="85"/>
    </location>
</feature>
<feature type="helix" evidence="4">
    <location>
        <begin position="88"/>
        <end position="100"/>
    </location>
</feature>
<feature type="helix" evidence="4">
    <location>
        <begin position="108"/>
        <end position="119"/>
    </location>
</feature>
<feature type="helix" evidence="4">
    <location>
        <begin position="124"/>
        <end position="133"/>
    </location>
</feature>
<feature type="helix" evidence="4">
    <location>
        <begin position="137"/>
        <end position="140"/>
    </location>
</feature>
<feature type="strand" evidence="4">
    <location>
        <begin position="145"/>
        <end position="150"/>
    </location>
</feature>
<feature type="helix" evidence="4">
    <location>
        <begin position="154"/>
        <end position="157"/>
    </location>
</feature>
<feature type="strand" evidence="4">
    <location>
        <begin position="161"/>
        <end position="167"/>
    </location>
</feature>
<feature type="strand" evidence="4">
    <location>
        <begin position="169"/>
        <end position="172"/>
    </location>
</feature>
<feature type="helix" evidence="4">
    <location>
        <begin position="178"/>
        <end position="181"/>
    </location>
</feature>
<feature type="helix" evidence="4">
    <location>
        <begin position="184"/>
        <end position="193"/>
    </location>
</feature>
<feature type="turn" evidence="4">
    <location>
        <begin position="195"/>
        <end position="199"/>
    </location>
</feature>
<feature type="strand" evidence="4">
    <location>
        <begin position="202"/>
        <end position="204"/>
    </location>
</feature>
<feature type="helix" evidence="4">
    <location>
        <begin position="206"/>
        <end position="208"/>
    </location>
</feature>
<feature type="helix" evidence="4">
    <location>
        <begin position="214"/>
        <end position="216"/>
    </location>
</feature>
<feature type="strand" evidence="4">
    <location>
        <begin position="217"/>
        <end position="219"/>
    </location>
</feature>
<feature type="strand" evidence="4">
    <location>
        <begin position="221"/>
        <end position="232"/>
    </location>
</feature>
<feature type="helix" evidence="4">
    <location>
        <begin position="235"/>
        <end position="247"/>
    </location>
</feature>
<feature type="strand" evidence="4">
    <location>
        <begin position="255"/>
        <end position="260"/>
    </location>
</feature>
<feature type="helix" evidence="4">
    <location>
        <begin position="270"/>
        <end position="272"/>
    </location>
</feature>
<feature type="strand" evidence="4">
    <location>
        <begin position="274"/>
        <end position="276"/>
    </location>
</feature>
<feature type="strand" evidence="4">
    <location>
        <begin position="278"/>
        <end position="284"/>
    </location>
</feature>
<feature type="helix" evidence="4">
    <location>
        <begin position="286"/>
        <end position="288"/>
    </location>
</feature>
<feature type="turn" evidence="4">
    <location>
        <begin position="289"/>
        <end position="291"/>
    </location>
</feature>
<feature type="strand" evidence="4">
    <location>
        <begin position="293"/>
        <end position="298"/>
    </location>
</feature>
<feature type="turn" evidence="4">
    <location>
        <begin position="299"/>
        <end position="301"/>
    </location>
</feature>
<feature type="strand" evidence="4">
    <location>
        <begin position="309"/>
        <end position="311"/>
    </location>
</feature>
<feature type="helix" evidence="4">
    <location>
        <begin position="315"/>
        <end position="323"/>
    </location>
</feature>
<feature type="strand" evidence="4">
    <location>
        <begin position="328"/>
        <end position="331"/>
    </location>
</feature>
<feature type="helix" evidence="4">
    <location>
        <begin position="339"/>
        <end position="347"/>
    </location>
</feature>
<feature type="turn" evidence="4">
    <location>
        <begin position="348"/>
        <end position="351"/>
    </location>
</feature>
<feature type="strand" evidence="4">
    <location>
        <begin position="354"/>
        <end position="357"/>
    </location>
</feature>
<feature type="strand" evidence="4">
    <location>
        <begin position="360"/>
        <end position="364"/>
    </location>
</feature>
<feature type="helix" evidence="4">
    <location>
        <begin position="368"/>
        <end position="376"/>
    </location>
</feature>
<feature type="strand" evidence="4">
    <location>
        <begin position="380"/>
        <end position="384"/>
    </location>
</feature>
<feature type="helix" evidence="4">
    <location>
        <begin position="387"/>
        <end position="390"/>
    </location>
</feature>
<feature type="turn" evidence="4">
    <location>
        <begin position="396"/>
        <end position="399"/>
    </location>
</feature>
<feature type="strand" evidence="4">
    <location>
        <begin position="401"/>
        <end position="405"/>
    </location>
</feature>
<dbReference type="EC" id="3.5.3.6"/>
<dbReference type="EMBL" id="X54141">
    <property type="protein sequence ID" value="CAA38080.1"/>
    <property type="molecule type" value="Genomic_DNA"/>
</dbReference>
<dbReference type="EMBL" id="X54312">
    <property type="protein sequence ID" value="CAA38210.1"/>
    <property type="molecule type" value="Genomic_DNA"/>
</dbReference>
<dbReference type="EMBL" id="X52459">
    <property type="protein sequence ID" value="CAA36693.2"/>
    <property type="molecule type" value="Genomic_DNA"/>
</dbReference>
<dbReference type="PIR" id="A41465">
    <property type="entry name" value="A41465"/>
</dbReference>
<dbReference type="RefSeq" id="WP_004416214.1">
    <property type="nucleotide sequence ID" value="NZ_LR215044.1"/>
</dbReference>
<dbReference type="PDB" id="1LXY">
    <property type="method" value="X-ray"/>
    <property type="resolution" value="2.00 A"/>
    <property type="chains" value="A/B=2-410"/>
</dbReference>
<dbReference type="PDB" id="1S9R">
    <property type="method" value="X-ray"/>
    <property type="resolution" value="1.60 A"/>
    <property type="chains" value="A/B=1-410"/>
</dbReference>
<dbReference type="PDBsum" id="1LXY"/>
<dbReference type="PDBsum" id="1S9R"/>
<dbReference type="SMR" id="P23793"/>
<dbReference type="STRING" id="2094.MARG145_0668"/>
<dbReference type="GeneID" id="80703650"/>
<dbReference type="eggNOG" id="COG2235">
    <property type="taxonomic scope" value="Bacteria"/>
</dbReference>
<dbReference type="OrthoDB" id="9807502at2"/>
<dbReference type="BRENDA" id="3.5.3.6">
    <property type="organism ID" value="3521"/>
</dbReference>
<dbReference type="SABIO-RK" id="P23793"/>
<dbReference type="UniPathway" id="UPA00254">
    <property type="reaction ID" value="UER00364"/>
</dbReference>
<dbReference type="EvolutionaryTrace" id="P23793"/>
<dbReference type="GO" id="GO:0005737">
    <property type="term" value="C:cytoplasm"/>
    <property type="evidence" value="ECO:0007669"/>
    <property type="project" value="UniProtKB-SubCell"/>
</dbReference>
<dbReference type="GO" id="GO:0016990">
    <property type="term" value="F:arginine deiminase activity"/>
    <property type="evidence" value="ECO:0007669"/>
    <property type="project" value="UniProtKB-UniRule"/>
</dbReference>
<dbReference type="GO" id="GO:0019547">
    <property type="term" value="P:arginine catabolic process to ornithine"/>
    <property type="evidence" value="ECO:0007669"/>
    <property type="project" value="UniProtKB-UniRule"/>
</dbReference>
<dbReference type="GO" id="GO:0019546">
    <property type="term" value="P:arginine deiminase pathway"/>
    <property type="evidence" value="ECO:0007669"/>
    <property type="project" value="TreeGrafter"/>
</dbReference>
<dbReference type="Gene3D" id="1.10.3930.10">
    <property type="entry name" value="Arginine deiminase"/>
    <property type="match status" value="1"/>
</dbReference>
<dbReference type="Gene3D" id="3.75.10.10">
    <property type="entry name" value="L-arginine/glycine Amidinotransferase, Chain A"/>
    <property type="match status" value="1"/>
</dbReference>
<dbReference type="HAMAP" id="MF_00242">
    <property type="entry name" value="Arg_deiminase"/>
    <property type="match status" value="1"/>
</dbReference>
<dbReference type="InterPro" id="IPR003876">
    <property type="entry name" value="Arg_deiminase"/>
</dbReference>
<dbReference type="NCBIfam" id="TIGR01078">
    <property type="entry name" value="arcA"/>
    <property type="match status" value="1"/>
</dbReference>
<dbReference type="PANTHER" id="PTHR47271">
    <property type="entry name" value="ARGININE DEIMINASE"/>
    <property type="match status" value="1"/>
</dbReference>
<dbReference type="PANTHER" id="PTHR47271:SF2">
    <property type="entry name" value="ARGININE DEIMINASE"/>
    <property type="match status" value="1"/>
</dbReference>
<dbReference type="Pfam" id="PF02274">
    <property type="entry name" value="ADI"/>
    <property type="match status" value="1"/>
</dbReference>
<dbReference type="PIRSF" id="PIRSF006356">
    <property type="entry name" value="Arg_deiminase"/>
    <property type="match status" value="1"/>
</dbReference>
<dbReference type="PRINTS" id="PR01466">
    <property type="entry name" value="ARGDEIMINASE"/>
</dbReference>
<dbReference type="SUPFAM" id="SSF55909">
    <property type="entry name" value="Pentein"/>
    <property type="match status" value="1"/>
</dbReference>
<keyword id="KW-0002">3D-structure</keyword>
<keyword id="KW-0056">Arginine metabolism</keyword>
<keyword id="KW-0963">Cytoplasm</keyword>
<keyword id="KW-0903">Direct protein sequencing</keyword>
<keyword id="KW-0378">Hydrolase</keyword>
<evidence type="ECO:0000250" key="1"/>
<evidence type="ECO:0000269" key="2">
    <source>
    </source>
</evidence>
<evidence type="ECO:0000305" key="3"/>
<evidence type="ECO:0007829" key="4">
    <source>
        <dbReference type="PDB" id="1S9R"/>
    </source>
</evidence>
<protein>
    <recommendedName>
        <fullName>Arginine deiminase</fullName>
        <shortName>ADI</shortName>
        <ecNumber>3.5.3.6</ecNumber>
    </recommendedName>
    <alternativeName>
        <fullName>Arginine dihydrolase</fullName>
        <shortName>AD</shortName>
    </alternativeName>
</protein>
<reference key="1">
    <citation type="journal article" date="1994" name="J. Biotechnol.">
        <title>High-level expression of Mycoplasma arginine deiminase in Escherichia coli and its efficient renaturation as an anti-tumor enzyme.</title>
        <authorList>
            <person name="Misawa S."/>
            <person name="Aoshima M."/>
            <person name="Takaku H."/>
            <person name="Matsumoto M."/>
            <person name="Hayashi H."/>
        </authorList>
    </citation>
    <scope>NUCLEOTIDE SEQUENCE [GENOMIC DNA]</scope>
    <scope>CHARACTERIZATION</scope>
    <source>
        <strain>ATCC 23838 / CIP 71.23 / NBRC 14476 / NCTC 10129 / G230</strain>
    </source>
</reference>
<reference key="2">
    <citation type="journal article" date="1990" name="Infect. Immun.">
        <title>Cloning and nucleotide sequence of the gene encoding arginine deiminase of Mycoplasma arginini.</title>
        <authorList>
            <person name="Ohno T."/>
            <person name="Ando O."/>
            <person name="Sugimura K."/>
            <person name="Taniai M."/>
            <person name="Suzuki M."/>
            <person name="Fukuda S."/>
            <person name="Nagase Y."/>
            <person name="Yamamoto K."/>
            <person name="Azuma I."/>
        </authorList>
    </citation>
    <scope>NUCLEOTIDE SEQUENCE [GENOMIC DNA]</scope>
    <scope>PARTIAL PROTEIN SEQUENCE</scope>
</reference>
<reference key="3">
    <citation type="journal article" date="1990" name="Mol. Gen. Genet.">
        <title>Cloning and sequence analysis of the arginine deiminase gene from Mycoplasma arginini.</title>
        <authorList>
            <person name="Kondo K."/>
            <person name="Sone H."/>
            <person name="Yoshida H."/>
            <person name="Toida T."/>
            <person name="Kanatani K."/>
            <person name="Hong Y.-M."/>
            <person name="Nishino N."/>
            <person name="Tanaka J."/>
        </authorList>
    </citation>
    <scope>NUCLEOTIDE SEQUENCE [GENOMIC DNA]</scope>
    <scope>PARTIAL PROTEIN SEQUENCE</scope>
    <source>
        <strain>KM101</strain>
    </source>
</reference>
<reference key="4">
    <citation type="journal article" date="1990" name="Cancer Res.">
        <title>Potent growth inhibition of human tumor cells in culture by arginine deiminase purified from a culture medium of a Mycoplasma-infected cell line.</title>
        <authorList>
            <person name="Miyazaki K."/>
            <person name="Takaku H."/>
            <person name="Umeda M."/>
            <person name="Fujita T."/>
            <person name="Huang W.D."/>
            <person name="Kimura T."/>
            <person name="Yamashita J."/>
            <person name="Horio T."/>
        </authorList>
    </citation>
    <scope>PROTEIN SEQUENCE OF 2-18</scope>
</reference>